<protein>
    <recommendedName>
        <fullName evidence="1">Putative transport protein YPTS_4123</fullName>
    </recommendedName>
</protein>
<name>Y4123_YERPB</name>
<feature type="chain" id="PRO_1000135221" description="Putative transport protein YPTS_4123">
    <location>
        <begin position="1"/>
        <end position="552"/>
    </location>
</feature>
<feature type="transmembrane region" description="Helical" evidence="1">
    <location>
        <begin position="1"/>
        <end position="21"/>
    </location>
</feature>
<feature type="transmembrane region" description="Helical" evidence="1">
    <location>
        <begin position="26"/>
        <end position="46"/>
    </location>
</feature>
<feature type="transmembrane region" description="Helical" evidence="1">
    <location>
        <begin position="65"/>
        <end position="85"/>
    </location>
</feature>
<feature type="transmembrane region" description="Helical" evidence="1">
    <location>
        <begin position="96"/>
        <end position="116"/>
    </location>
</feature>
<feature type="transmembrane region" description="Helical" evidence="1">
    <location>
        <begin position="119"/>
        <end position="139"/>
    </location>
</feature>
<feature type="transmembrane region" description="Helical" evidence="1">
    <location>
        <begin position="158"/>
        <end position="178"/>
    </location>
</feature>
<feature type="transmembrane region" description="Helical" evidence="1">
    <location>
        <begin position="371"/>
        <end position="391"/>
    </location>
</feature>
<feature type="transmembrane region" description="Helical" evidence="1">
    <location>
        <begin position="393"/>
        <end position="413"/>
    </location>
</feature>
<feature type="transmembrane region" description="Helical" evidence="1">
    <location>
        <begin position="439"/>
        <end position="459"/>
    </location>
</feature>
<feature type="transmembrane region" description="Helical" evidence="1">
    <location>
        <begin position="464"/>
        <end position="484"/>
    </location>
</feature>
<feature type="transmembrane region" description="Helical" evidence="1">
    <location>
        <begin position="493"/>
        <end position="513"/>
    </location>
</feature>
<feature type="transmembrane region" description="Helical" evidence="1">
    <location>
        <begin position="530"/>
        <end position="550"/>
    </location>
</feature>
<feature type="domain" description="RCK C-terminal 1" evidence="1">
    <location>
        <begin position="192"/>
        <end position="276"/>
    </location>
</feature>
<feature type="domain" description="RCK C-terminal 2" evidence="1">
    <location>
        <begin position="279"/>
        <end position="361"/>
    </location>
</feature>
<dbReference type="EMBL" id="CP001048">
    <property type="protein sequence ID" value="ACC91069.1"/>
    <property type="molecule type" value="Genomic_DNA"/>
</dbReference>
<dbReference type="RefSeq" id="WP_011193331.1">
    <property type="nucleotide sequence ID" value="NZ_CP009780.1"/>
</dbReference>
<dbReference type="SMR" id="B2K7E7"/>
<dbReference type="KEGG" id="ypb:YPTS_4123"/>
<dbReference type="PATRIC" id="fig|502801.10.peg.3598"/>
<dbReference type="GO" id="GO:0005886">
    <property type="term" value="C:plasma membrane"/>
    <property type="evidence" value="ECO:0007669"/>
    <property type="project" value="UniProtKB-SubCell"/>
</dbReference>
<dbReference type="GO" id="GO:0008324">
    <property type="term" value="F:monoatomic cation transmembrane transporter activity"/>
    <property type="evidence" value="ECO:0007669"/>
    <property type="project" value="InterPro"/>
</dbReference>
<dbReference type="GO" id="GO:0006813">
    <property type="term" value="P:potassium ion transport"/>
    <property type="evidence" value="ECO:0007669"/>
    <property type="project" value="InterPro"/>
</dbReference>
<dbReference type="Gene3D" id="3.30.70.1450">
    <property type="entry name" value="Regulator of K+ conductance, C-terminal domain"/>
    <property type="match status" value="2"/>
</dbReference>
<dbReference type="HAMAP" id="MF_01016">
    <property type="entry name" value="YidE"/>
    <property type="match status" value="1"/>
</dbReference>
<dbReference type="InterPro" id="IPR050144">
    <property type="entry name" value="AAE_transporter"/>
</dbReference>
<dbReference type="InterPro" id="IPR006037">
    <property type="entry name" value="RCK_C"/>
</dbReference>
<dbReference type="InterPro" id="IPR036721">
    <property type="entry name" value="RCK_C_sf"/>
</dbReference>
<dbReference type="InterPro" id="IPR023018">
    <property type="entry name" value="Transpt_YidE_put"/>
</dbReference>
<dbReference type="InterPro" id="IPR006512">
    <property type="entry name" value="YidE_YbjL"/>
</dbReference>
<dbReference type="NCBIfam" id="NF003007">
    <property type="entry name" value="PRK03818.1"/>
    <property type="match status" value="1"/>
</dbReference>
<dbReference type="NCBIfam" id="TIGR01625">
    <property type="entry name" value="YidE_YbjL_dupl"/>
    <property type="match status" value="2"/>
</dbReference>
<dbReference type="PANTHER" id="PTHR30445">
    <property type="entry name" value="K(+)_H(+) ANTIPORTER SUBUNIT KHTT"/>
    <property type="match status" value="1"/>
</dbReference>
<dbReference type="PANTHER" id="PTHR30445:SF3">
    <property type="entry name" value="TRANSPORT PROTEIN YIDE-RELATED"/>
    <property type="match status" value="1"/>
</dbReference>
<dbReference type="Pfam" id="PF06826">
    <property type="entry name" value="Asp-Al_Ex"/>
    <property type="match status" value="2"/>
</dbReference>
<dbReference type="Pfam" id="PF02080">
    <property type="entry name" value="TrkA_C"/>
    <property type="match status" value="2"/>
</dbReference>
<dbReference type="SUPFAM" id="SSF116726">
    <property type="entry name" value="TrkA C-terminal domain-like"/>
    <property type="match status" value="2"/>
</dbReference>
<dbReference type="PROSITE" id="PS51202">
    <property type="entry name" value="RCK_C"/>
    <property type="match status" value="2"/>
</dbReference>
<comment type="subcellular location">
    <subcellularLocation>
        <location evidence="1">Cell membrane</location>
        <topology evidence="1">Multi-pass membrane protein</topology>
    </subcellularLocation>
</comment>
<comment type="similarity">
    <text evidence="1">Belongs to the AAE transporter (TC 2.A.81) family. YidE subfamily.</text>
</comment>
<proteinExistence type="inferred from homology"/>
<keyword id="KW-1003">Cell membrane</keyword>
<keyword id="KW-0472">Membrane</keyword>
<keyword id="KW-0677">Repeat</keyword>
<keyword id="KW-0812">Transmembrane</keyword>
<keyword id="KW-1133">Transmembrane helix</keyword>
<keyword id="KW-0813">Transport</keyword>
<reference key="1">
    <citation type="submission" date="2008-04" db="EMBL/GenBank/DDBJ databases">
        <title>Complete sequence of Yersinia pseudotuberculosis PB1/+.</title>
        <authorList>
            <person name="Copeland A."/>
            <person name="Lucas S."/>
            <person name="Lapidus A."/>
            <person name="Glavina del Rio T."/>
            <person name="Dalin E."/>
            <person name="Tice H."/>
            <person name="Bruce D."/>
            <person name="Goodwin L."/>
            <person name="Pitluck S."/>
            <person name="Munk A.C."/>
            <person name="Brettin T."/>
            <person name="Detter J.C."/>
            <person name="Han C."/>
            <person name="Tapia R."/>
            <person name="Schmutz J."/>
            <person name="Larimer F."/>
            <person name="Land M."/>
            <person name="Hauser L."/>
            <person name="Challacombe J.F."/>
            <person name="Green L."/>
            <person name="Lindler L.E."/>
            <person name="Nikolich M.P."/>
            <person name="Richardson P."/>
        </authorList>
    </citation>
    <scope>NUCLEOTIDE SEQUENCE [LARGE SCALE GENOMIC DNA]</scope>
    <source>
        <strain>PB1/+</strain>
    </source>
</reference>
<evidence type="ECO:0000255" key="1">
    <source>
        <dbReference type="HAMAP-Rule" id="MF_01016"/>
    </source>
</evidence>
<organism>
    <name type="scientific">Yersinia pseudotuberculosis serotype IB (strain PB1/+)</name>
    <dbReference type="NCBI Taxonomy" id="502801"/>
    <lineage>
        <taxon>Bacteria</taxon>
        <taxon>Pseudomonadati</taxon>
        <taxon>Pseudomonadota</taxon>
        <taxon>Gammaproteobacteria</taxon>
        <taxon>Enterobacterales</taxon>
        <taxon>Yersiniaceae</taxon>
        <taxon>Yersinia</taxon>
    </lineage>
</organism>
<accession>B2K7E7</accession>
<gene>
    <name type="ordered locus">YPTS_4123</name>
</gene>
<sequence>MSAIALTVSMLALVAVLGLWIGNWKIYGVGLGIGGVLFGGIIVGHFAQTYQIVLNGDMLHFIQEFGLILFVYTIGIQVGPGFFSSLRVSGLRLNCFAILMVVVGGLVTAIIHKLFAVPLPIILGVFSGAVTNTPALGAAQQILTDLGSPPQLVSQMGMGYAMAYPFGICGILLVMWLIRLFFKINIDREAKAFDSSYGQNRELLQTMNVAVRNPNLHGLSVQDVPLLNSDEVVCSRLKRGDLLMVPMPATVIEIGDYLHLVGQRDALEKVRLVVGEEVDVTLSTAGTALQTARVVVTNEAVLGKKIRDLNLKQKYDVVITRLNRAGIELVASNSANLQFGDILNLVGRPEAIEAVSAIVGNAQQKLQQVQMLPVFIGVGLGVLLGSIPLFVPGFPAALRLGLAGGPLVVALILGRIGSIGKLYWFMPPSANLALRELGIVLFLSVVGLKSGGDFINTLVNGDGLAWIGYGAMITGIPLLTVGILARMLVKMNYLTLCGMLAGSMTDPPALAFANGLHPTSGAAALSYATVYPLAMFLRIMSPQILAVLFWTL</sequence>